<sequence length="112" mass="12181">MNATILVKIITPLSIALEKQAKMVTMSGEEGMFGVLPSHVPMIVSLKAGLVQVYIDDMHKSENTYLISSGVTEVTANYINIATETAINVTNFSEAEIATKLLDLQKTLSDQH</sequence>
<keyword id="KW-0066">ATP synthesis</keyword>
<keyword id="KW-1003">Cell membrane</keyword>
<keyword id="KW-0139">CF(1)</keyword>
<keyword id="KW-0375">Hydrogen ion transport</keyword>
<keyword id="KW-0406">Ion transport</keyword>
<keyword id="KW-0472">Membrane</keyword>
<keyword id="KW-0813">Transport</keyword>
<protein>
    <recommendedName>
        <fullName evidence="1">ATP synthase epsilon chain</fullName>
    </recommendedName>
    <alternativeName>
        <fullName evidence="1">ATP synthase F1 sector epsilon subunit</fullName>
    </alternativeName>
    <alternativeName>
        <fullName evidence="1">F-ATPase epsilon subunit</fullName>
    </alternativeName>
</protein>
<reference key="1">
    <citation type="journal article" date="2009" name="BMC Genomics">
        <title>Analysis of the Rickettsia africae genome reveals that virulence acquisition in Rickettsia species may be explained by genome reduction.</title>
        <authorList>
            <person name="Fournier P.-E."/>
            <person name="El Karkouri K."/>
            <person name="Leroy Q."/>
            <person name="Robert C."/>
            <person name="Giumelli B."/>
            <person name="Renesto P."/>
            <person name="Socolovschi C."/>
            <person name="Parola P."/>
            <person name="Audic S."/>
            <person name="Raoult D."/>
        </authorList>
    </citation>
    <scope>NUCLEOTIDE SEQUENCE [LARGE SCALE GENOMIC DNA]</scope>
    <source>
        <strain>ESF-5</strain>
    </source>
</reference>
<proteinExistence type="inferred from homology"/>
<organism>
    <name type="scientific">Rickettsia africae (strain ESF-5)</name>
    <dbReference type="NCBI Taxonomy" id="347255"/>
    <lineage>
        <taxon>Bacteria</taxon>
        <taxon>Pseudomonadati</taxon>
        <taxon>Pseudomonadota</taxon>
        <taxon>Alphaproteobacteria</taxon>
        <taxon>Rickettsiales</taxon>
        <taxon>Rickettsiaceae</taxon>
        <taxon>Rickettsieae</taxon>
        <taxon>Rickettsia</taxon>
        <taxon>spotted fever group</taxon>
    </lineage>
</organism>
<comment type="function">
    <text evidence="1">Produces ATP from ADP in the presence of a proton gradient across the membrane.</text>
</comment>
<comment type="subunit">
    <text evidence="1">F-type ATPases have 2 components, CF(1) - the catalytic core - and CF(0) - the membrane proton channel. CF(1) has five subunits: alpha(3), beta(3), gamma(1), delta(1), epsilon(1). CF(0) has three main subunits: a, b and c.</text>
</comment>
<comment type="subcellular location">
    <subcellularLocation>
        <location evidence="1">Cell membrane</location>
        <topology evidence="1">Peripheral membrane protein</topology>
    </subcellularLocation>
</comment>
<comment type="similarity">
    <text evidence="1">Belongs to the ATPase epsilon chain family.</text>
</comment>
<evidence type="ECO:0000255" key="1">
    <source>
        <dbReference type="HAMAP-Rule" id="MF_00530"/>
    </source>
</evidence>
<feature type="chain" id="PRO_1000211790" description="ATP synthase epsilon chain">
    <location>
        <begin position="1"/>
        <end position="112"/>
    </location>
</feature>
<dbReference type="EMBL" id="CP001612">
    <property type="protein sequence ID" value="ACP53920.1"/>
    <property type="molecule type" value="Genomic_DNA"/>
</dbReference>
<dbReference type="RefSeq" id="WP_012720048.1">
    <property type="nucleotide sequence ID" value="NC_012633.1"/>
</dbReference>
<dbReference type="SMR" id="C3PLT0"/>
<dbReference type="KEGG" id="raf:RAF_ORF1125"/>
<dbReference type="HOGENOM" id="CLU_084338_2_1_5"/>
<dbReference type="Proteomes" id="UP000002305">
    <property type="component" value="Chromosome"/>
</dbReference>
<dbReference type="GO" id="GO:0005886">
    <property type="term" value="C:plasma membrane"/>
    <property type="evidence" value="ECO:0007669"/>
    <property type="project" value="UniProtKB-SubCell"/>
</dbReference>
<dbReference type="GO" id="GO:0045259">
    <property type="term" value="C:proton-transporting ATP synthase complex"/>
    <property type="evidence" value="ECO:0007669"/>
    <property type="project" value="UniProtKB-KW"/>
</dbReference>
<dbReference type="GO" id="GO:0005524">
    <property type="term" value="F:ATP binding"/>
    <property type="evidence" value="ECO:0007669"/>
    <property type="project" value="UniProtKB-UniRule"/>
</dbReference>
<dbReference type="GO" id="GO:0046933">
    <property type="term" value="F:proton-transporting ATP synthase activity, rotational mechanism"/>
    <property type="evidence" value="ECO:0007669"/>
    <property type="project" value="UniProtKB-UniRule"/>
</dbReference>
<dbReference type="CDD" id="cd12152">
    <property type="entry name" value="F1-ATPase_delta"/>
    <property type="match status" value="1"/>
</dbReference>
<dbReference type="Gene3D" id="2.60.15.10">
    <property type="entry name" value="F0F1 ATP synthase delta/epsilon subunit, N-terminal"/>
    <property type="match status" value="1"/>
</dbReference>
<dbReference type="HAMAP" id="MF_00530">
    <property type="entry name" value="ATP_synth_epsil_bac"/>
    <property type="match status" value="1"/>
</dbReference>
<dbReference type="InterPro" id="IPR001469">
    <property type="entry name" value="ATP_synth_F1_dsu/esu"/>
</dbReference>
<dbReference type="InterPro" id="IPR020546">
    <property type="entry name" value="ATP_synth_F1_dsu/esu_N"/>
</dbReference>
<dbReference type="InterPro" id="IPR036771">
    <property type="entry name" value="ATPsynth_dsu/esu_N"/>
</dbReference>
<dbReference type="NCBIfam" id="TIGR01216">
    <property type="entry name" value="ATP_synt_epsi"/>
    <property type="match status" value="1"/>
</dbReference>
<dbReference type="NCBIfam" id="NF002403">
    <property type="entry name" value="PRK01474.1"/>
    <property type="match status" value="1"/>
</dbReference>
<dbReference type="PANTHER" id="PTHR13822">
    <property type="entry name" value="ATP SYNTHASE DELTA/EPSILON CHAIN"/>
    <property type="match status" value="1"/>
</dbReference>
<dbReference type="PANTHER" id="PTHR13822:SF10">
    <property type="entry name" value="ATP SYNTHASE EPSILON CHAIN, CHLOROPLASTIC"/>
    <property type="match status" value="1"/>
</dbReference>
<dbReference type="Pfam" id="PF02823">
    <property type="entry name" value="ATP-synt_DE_N"/>
    <property type="match status" value="1"/>
</dbReference>
<dbReference type="SUPFAM" id="SSF51344">
    <property type="entry name" value="Epsilon subunit of F1F0-ATP synthase N-terminal domain"/>
    <property type="match status" value="1"/>
</dbReference>
<accession>C3PLT0</accession>
<name>ATPE_RICAE</name>
<gene>
    <name evidence="1" type="primary">atpC</name>
    <name type="ordered locus">RAF_ORF1125</name>
</gene>